<gene>
    <name evidence="1" type="primary">fabZ</name>
    <name type="ordered locus">SSP0785</name>
</gene>
<organism>
    <name type="scientific">Staphylococcus saprophyticus subsp. saprophyticus (strain ATCC 15305 / DSM 20229 / NCIMB 8711 / NCTC 7292 / S-41)</name>
    <dbReference type="NCBI Taxonomy" id="342451"/>
    <lineage>
        <taxon>Bacteria</taxon>
        <taxon>Bacillati</taxon>
        <taxon>Bacillota</taxon>
        <taxon>Bacilli</taxon>
        <taxon>Bacillales</taxon>
        <taxon>Staphylococcaceae</taxon>
        <taxon>Staphylococcus</taxon>
    </lineage>
</organism>
<reference key="1">
    <citation type="journal article" date="2005" name="Proc. Natl. Acad. Sci. U.S.A.">
        <title>Whole genome sequence of Staphylococcus saprophyticus reveals the pathogenesis of uncomplicated urinary tract infection.</title>
        <authorList>
            <person name="Kuroda M."/>
            <person name="Yamashita A."/>
            <person name="Hirakawa H."/>
            <person name="Kumano M."/>
            <person name="Morikawa K."/>
            <person name="Higashide M."/>
            <person name="Maruyama A."/>
            <person name="Inose Y."/>
            <person name="Matoba K."/>
            <person name="Toh H."/>
            <person name="Kuhara S."/>
            <person name="Hattori M."/>
            <person name="Ohta T."/>
        </authorList>
    </citation>
    <scope>NUCLEOTIDE SEQUENCE [LARGE SCALE GENOMIC DNA]</scope>
    <source>
        <strain>ATCC 15305 / DSM 20229 / NCIMB 8711 / NCTC 7292 / S-41</strain>
    </source>
</reference>
<protein>
    <recommendedName>
        <fullName evidence="1">3-hydroxyacyl-[acyl-carrier-protein] dehydratase FabZ</fullName>
        <ecNumber evidence="1">4.2.1.59</ecNumber>
    </recommendedName>
    <alternativeName>
        <fullName evidence="1">(3R)-hydroxymyristoyl-[acyl-carrier-protein] dehydratase</fullName>
        <shortName evidence="1">(3R)-hydroxymyristoyl-ACP dehydrase</shortName>
    </alternativeName>
    <alternativeName>
        <fullName evidence="1">Beta-hydroxyacyl-ACP dehydratase</fullName>
    </alternativeName>
</protein>
<evidence type="ECO:0000255" key="1">
    <source>
        <dbReference type="HAMAP-Rule" id="MF_00406"/>
    </source>
</evidence>
<feature type="chain" id="PRO_0000230840" description="3-hydroxyacyl-[acyl-carrier-protein] dehydratase FabZ">
    <location>
        <begin position="1"/>
        <end position="145"/>
    </location>
</feature>
<feature type="active site" evidence="1">
    <location>
        <position position="51"/>
    </location>
</feature>
<dbReference type="EC" id="4.2.1.59" evidence="1"/>
<dbReference type="EMBL" id="AP008934">
    <property type="protein sequence ID" value="BAE17930.1"/>
    <property type="molecule type" value="Genomic_DNA"/>
</dbReference>
<dbReference type="RefSeq" id="WP_002482729.1">
    <property type="nucleotide sequence ID" value="NZ_MTGA01000032.1"/>
</dbReference>
<dbReference type="SMR" id="Q49Z46"/>
<dbReference type="GeneID" id="66866941"/>
<dbReference type="KEGG" id="ssp:SSP0785"/>
<dbReference type="eggNOG" id="COG0764">
    <property type="taxonomic scope" value="Bacteria"/>
</dbReference>
<dbReference type="HOGENOM" id="CLU_078912_3_0_9"/>
<dbReference type="OrthoDB" id="9772788at2"/>
<dbReference type="Proteomes" id="UP000006371">
    <property type="component" value="Chromosome"/>
</dbReference>
<dbReference type="GO" id="GO:0005737">
    <property type="term" value="C:cytoplasm"/>
    <property type="evidence" value="ECO:0007669"/>
    <property type="project" value="UniProtKB-SubCell"/>
</dbReference>
<dbReference type="GO" id="GO:0016020">
    <property type="term" value="C:membrane"/>
    <property type="evidence" value="ECO:0007669"/>
    <property type="project" value="GOC"/>
</dbReference>
<dbReference type="GO" id="GO:0019171">
    <property type="term" value="F:(3R)-hydroxyacyl-[acyl-carrier-protein] dehydratase activity"/>
    <property type="evidence" value="ECO:0007669"/>
    <property type="project" value="UniProtKB-EC"/>
</dbReference>
<dbReference type="GO" id="GO:0006633">
    <property type="term" value="P:fatty acid biosynthetic process"/>
    <property type="evidence" value="ECO:0007669"/>
    <property type="project" value="UniProtKB-UniRule"/>
</dbReference>
<dbReference type="GO" id="GO:0009245">
    <property type="term" value="P:lipid A biosynthetic process"/>
    <property type="evidence" value="ECO:0007669"/>
    <property type="project" value="UniProtKB-UniRule"/>
</dbReference>
<dbReference type="CDD" id="cd01288">
    <property type="entry name" value="FabZ"/>
    <property type="match status" value="1"/>
</dbReference>
<dbReference type="FunFam" id="3.10.129.10:FF:000001">
    <property type="entry name" value="3-hydroxyacyl-[acyl-carrier-protein] dehydratase FabZ"/>
    <property type="match status" value="1"/>
</dbReference>
<dbReference type="Gene3D" id="3.10.129.10">
    <property type="entry name" value="Hotdog Thioesterase"/>
    <property type="match status" value="1"/>
</dbReference>
<dbReference type="HAMAP" id="MF_00406">
    <property type="entry name" value="FabZ"/>
    <property type="match status" value="1"/>
</dbReference>
<dbReference type="InterPro" id="IPR013114">
    <property type="entry name" value="FabA_FabZ"/>
</dbReference>
<dbReference type="InterPro" id="IPR010084">
    <property type="entry name" value="FabZ"/>
</dbReference>
<dbReference type="InterPro" id="IPR029069">
    <property type="entry name" value="HotDog_dom_sf"/>
</dbReference>
<dbReference type="NCBIfam" id="TIGR01750">
    <property type="entry name" value="fabZ"/>
    <property type="match status" value="1"/>
</dbReference>
<dbReference type="NCBIfam" id="NF000582">
    <property type="entry name" value="PRK00006.1"/>
    <property type="match status" value="1"/>
</dbReference>
<dbReference type="PANTHER" id="PTHR30272">
    <property type="entry name" value="3-HYDROXYACYL-[ACYL-CARRIER-PROTEIN] DEHYDRATASE"/>
    <property type="match status" value="1"/>
</dbReference>
<dbReference type="PANTHER" id="PTHR30272:SF1">
    <property type="entry name" value="3-HYDROXYACYL-[ACYL-CARRIER-PROTEIN] DEHYDRATASE"/>
    <property type="match status" value="1"/>
</dbReference>
<dbReference type="Pfam" id="PF07977">
    <property type="entry name" value="FabA"/>
    <property type="match status" value="1"/>
</dbReference>
<dbReference type="SUPFAM" id="SSF54637">
    <property type="entry name" value="Thioesterase/thiol ester dehydrase-isomerase"/>
    <property type="match status" value="1"/>
</dbReference>
<proteinExistence type="inferred from homology"/>
<keyword id="KW-0963">Cytoplasm</keyword>
<keyword id="KW-0441">Lipid A biosynthesis</keyword>
<keyword id="KW-0444">Lipid biosynthesis</keyword>
<keyword id="KW-0443">Lipid metabolism</keyword>
<keyword id="KW-0456">Lyase</keyword>
<keyword id="KW-1185">Reference proteome</keyword>
<name>FABZ_STAS1</name>
<comment type="function">
    <text evidence="1">Involved in unsaturated fatty acids biosynthesis. Catalyzes the dehydration of short chain beta-hydroxyacyl-ACPs and long chain saturated and unsaturated beta-hydroxyacyl-ACPs.</text>
</comment>
<comment type="catalytic activity">
    <reaction evidence="1">
        <text>a (3R)-hydroxyacyl-[ACP] = a (2E)-enoyl-[ACP] + H2O</text>
        <dbReference type="Rhea" id="RHEA:13097"/>
        <dbReference type="Rhea" id="RHEA-COMP:9925"/>
        <dbReference type="Rhea" id="RHEA-COMP:9945"/>
        <dbReference type="ChEBI" id="CHEBI:15377"/>
        <dbReference type="ChEBI" id="CHEBI:78784"/>
        <dbReference type="ChEBI" id="CHEBI:78827"/>
        <dbReference type="EC" id="4.2.1.59"/>
    </reaction>
</comment>
<comment type="subcellular location">
    <subcellularLocation>
        <location evidence="1">Cytoplasm</location>
    </subcellularLocation>
</comment>
<comment type="similarity">
    <text evidence="1">Belongs to the thioester dehydratase family. FabZ subfamily.</text>
</comment>
<accession>Q49Z46</accession>
<sequence length="145" mass="15979">METIFDYNQIKEIIPHRQPFLLIDRVVEYEVGTRCVAIKQVSGNEPFFQGHFPEYAVMPGVLITEALAQTGAVAILNSEENKGKLAFFAGIDKCRFKKQVTPGDTLKLEVEITKMRGPIGKGNAKATVDGEVACSCELTFAIQAK</sequence>